<proteinExistence type="inferred from homology"/>
<dbReference type="EC" id="5.3.1.16" evidence="1"/>
<dbReference type="EMBL" id="AE017221">
    <property type="protein sequence ID" value="AAS81147.1"/>
    <property type="molecule type" value="Genomic_DNA"/>
</dbReference>
<dbReference type="RefSeq" id="WP_011173233.1">
    <property type="nucleotide sequence ID" value="NC_005835.1"/>
</dbReference>
<dbReference type="SMR" id="P62356"/>
<dbReference type="KEGG" id="tth:TT_C0801"/>
<dbReference type="eggNOG" id="COG0106">
    <property type="taxonomic scope" value="Bacteria"/>
</dbReference>
<dbReference type="HOGENOM" id="CLU_048577_1_2_0"/>
<dbReference type="OrthoDB" id="9807749at2"/>
<dbReference type="UniPathway" id="UPA00031">
    <property type="reaction ID" value="UER00009"/>
</dbReference>
<dbReference type="Proteomes" id="UP000000592">
    <property type="component" value="Chromosome"/>
</dbReference>
<dbReference type="GO" id="GO:0005737">
    <property type="term" value="C:cytoplasm"/>
    <property type="evidence" value="ECO:0007669"/>
    <property type="project" value="UniProtKB-SubCell"/>
</dbReference>
<dbReference type="GO" id="GO:0003949">
    <property type="term" value="F:1-(5-phosphoribosyl)-5-[(5-phosphoribosylamino)methylideneamino]imidazole-4-carboxamide isomerase activity"/>
    <property type="evidence" value="ECO:0007669"/>
    <property type="project" value="UniProtKB-UniRule"/>
</dbReference>
<dbReference type="GO" id="GO:0000105">
    <property type="term" value="P:L-histidine biosynthetic process"/>
    <property type="evidence" value="ECO:0007669"/>
    <property type="project" value="UniProtKB-UniRule"/>
</dbReference>
<dbReference type="GO" id="GO:0000162">
    <property type="term" value="P:L-tryptophan biosynthetic process"/>
    <property type="evidence" value="ECO:0007669"/>
    <property type="project" value="TreeGrafter"/>
</dbReference>
<dbReference type="CDD" id="cd04732">
    <property type="entry name" value="HisA"/>
    <property type="match status" value="1"/>
</dbReference>
<dbReference type="FunFam" id="3.20.20.70:FF:000009">
    <property type="entry name" value="1-(5-phosphoribosyl)-5-[(5-phosphoribosylamino)methylideneamino] imidazole-4-carboxamide isomerase"/>
    <property type="match status" value="1"/>
</dbReference>
<dbReference type="Gene3D" id="3.20.20.70">
    <property type="entry name" value="Aldolase class I"/>
    <property type="match status" value="1"/>
</dbReference>
<dbReference type="HAMAP" id="MF_01014">
    <property type="entry name" value="HisA"/>
    <property type="match status" value="1"/>
</dbReference>
<dbReference type="InterPro" id="IPR013785">
    <property type="entry name" value="Aldolase_TIM"/>
</dbReference>
<dbReference type="InterPro" id="IPR006062">
    <property type="entry name" value="His_biosynth"/>
</dbReference>
<dbReference type="InterPro" id="IPR006063">
    <property type="entry name" value="HisA_bact_arch"/>
</dbReference>
<dbReference type="InterPro" id="IPR044524">
    <property type="entry name" value="Isoase_HisA-like"/>
</dbReference>
<dbReference type="InterPro" id="IPR023016">
    <property type="entry name" value="Isoase_HisA-like_bact"/>
</dbReference>
<dbReference type="InterPro" id="IPR011060">
    <property type="entry name" value="RibuloseP-bd_barrel"/>
</dbReference>
<dbReference type="NCBIfam" id="TIGR00007">
    <property type="entry name" value="1-(5-phosphoribosyl)-5-[(5-phosphoribosylamino)methylideneamino]imidazole-4-carboxamide isomerase"/>
    <property type="match status" value="1"/>
</dbReference>
<dbReference type="PANTHER" id="PTHR43090">
    <property type="entry name" value="1-(5-PHOSPHORIBOSYL)-5-[(5-PHOSPHORIBOSYLAMINO)METHYLIDENEAMINO] IMIDAZOLE-4-CARBOXAMIDE ISOMERASE"/>
    <property type="match status" value="1"/>
</dbReference>
<dbReference type="PANTHER" id="PTHR43090:SF2">
    <property type="entry name" value="1-(5-PHOSPHORIBOSYL)-5-[(5-PHOSPHORIBOSYLAMINO)METHYLIDENEAMINO] IMIDAZOLE-4-CARBOXAMIDE ISOMERASE"/>
    <property type="match status" value="1"/>
</dbReference>
<dbReference type="Pfam" id="PF00977">
    <property type="entry name" value="His_biosynth"/>
    <property type="match status" value="1"/>
</dbReference>
<dbReference type="SUPFAM" id="SSF51366">
    <property type="entry name" value="Ribulose-phoshate binding barrel"/>
    <property type="match status" value="1"/>
</dbReference>
<reference key="1">
    <citation type="journal article" date="2004" name="Nat. Biotechnol.">
        <title>The genome sequence of the extreme thermophile Thermus thermophilus.</title>
        <authorList>
            <person name="Henne A."/>
            <person name="Brueggemann H."/>
            <person name="Raasch C."/>
            <person name="Wiezer A."/>
            <person name="Hartsch T."/>
            <person name="Liesegang H."/>
            <person name="Johann A."/>
            <person name="Lienard T."/>
            <person name="Gohl O."/>
            <person name="Martinez-Arias R."/>
            <person name="Jacobi C."/>
            <person name="Starkuviene V."/>
            <person name="Schlenczeck S."/>
            <person name="Dencker S."/>
            <person name="Huber R."/>
            <person name="Klenk H.-P."/>
            <person name="Kramer W."/>
            <person name="Merkl R."/>
            <person name="Gottschalk G."/>
            <person name="Fritz H.-J."/>
        </authorList>
    </citation>
    <scope>NUCLEOTIDE SEQUENCE [LARGE SCALE GENOMIC DNA]</scope>
    <source>
        <strain>ATCC BAA-163 / DSM 7039 / HB27</strain>
    </source>
</reference>
<name>HIS4_THET2</name>
<evidence type="ECO:0000255" key="1">
    <source>
        <dbReference type="HAMAP-Rule" id="MF_01014"/>
    </source>
</evidence>
<comment type="catalytic activity">
    <reaction evidence="1">
        <text>1-(5-phospho-beta-D-ribosyl)-5-[(5-phospho-beta-D-ribosylamino)methylideneamino]imidazole-4-carboxamide = 5-[(5-phospho-1-deoxy-D-ribulos-1-ylimino)methylamino]-1-(5-phospho-beta-D-ribosyl)imidazole-4-carboxamide</text>
        <dbReference type="Rhea" id="RHEA:15469"/>
        <dbReference type="ChEBI" id="CHEBI:58435"/>
        <dbReference type="ChEBI" id="CHEBI:58525"/>
        <dbReference type="EC" id="5.3.1.16"/>
    </reaction>
</comment>
<comment type="pathway">
    <text evidence="1">Amino-acid biosynthesis; L-histidine biosynthesis; L-histidine from 5-phospho-alpha-D-ribose 1-diphosphate: step 4/9.</text>
</comment>
<comment type="subcellular location">
    <subcellularLocation>
        <location evidence="1">Cytoplasm</location>
    </subcellularLocation>
</comment>
<comment type="similarity">
    <text evidence="1">Belongs to the HisA/HisF family.</text>
</comment>
<protein>
    <recommendedName>
        <fullName evidence="1">1-(5-phosphoribosyl)-5-[(5-phosphoribosylamino)methylideneamino] imidazole-4-carboxamide isomerase</fullName>
        <ecNumber evidence="1">5.3.1.16</ecNumber>
    </recommendedName>
    <alternativeName>
        <fullName evidence="1">Phosphoribosylformimino-5-aminoimidazole carboxamide ribotide isomerase</fullName>
    </alternativeName>
</protein>
<feature type="chain" id="PRO_0000142069" description="1-(5-phosphoribosyl)-5-[(5-phosphoribosylamino)methylideneamino] imidazole-4-carboxamide isomerase">
    <location>
        <begin position="1"/>
        <end position="235"/>
    </location>
</feature>
<feature type="active site" description="Proton acceptor" evidence="1">
    <location>
        <position position="8"/>
    </location>
</feature>
<feature type="active site" description="Proton donor" evidence="1">
    <location>
        <position position="128"/>
    </location>
</feature>
<sequence length="235" mass="25094">MRLIPAVDLKSGKAVRLYEGDPARETPYGDPVEAALRFQEEGATLLHLVDLDRALGTGENREAVRRVAASLSIPFQLAGGIRSLEALQEALSLGASRAVVGTVAVKDPGLLARMLEAVGPDRLAVALDARGLEVVVSGWQEAASASALDLLRAWAEMGVRTLLYTDVRRDGTLLGLDREVVARVRAAWPHELIVGGGIASPEDLHLLQALGVDGALIGKALYEGRIRLKEAVWRS</sequence>
<accession>P62356</accession>
<gene>
    <name evidence="1" type="primary">hisA</name>
    <name type="ordered locus">TT_C0801</name>
</gene>
<keyword id="KW-0028">Amino-acid biosynthesis</keyword>
<keyword id="KW-0963">Cytoplasm</keyword>
<keyword id="KW-0368">Histidine biosynthesis</keyword>
<keyword id="KW-0413">Isomerase</keyword>
<organism>
    <name type="scientific">Thermus thermophilus (strain ATCC BAA-163 / DSM 7039 / HB27)</name>
    <dbReference type="NCBI Taxonomy" id="262724"/>
    <lineage>
        <taxon>Bacteria</taxon>
        <taxon>Thermotogati</taxon>
        <taxon>Deinococcota</taxon>
        <taxon>Deinococci</taxon>
        <taxon>Thermales</taxon>
        <taxon>Thermaceae</taxon>
        <taxon>Thermus</taxon>
    </lineage>
</organism>